<geneLocation type="chloroplast"/>
<feature type="chain" id="PRO_0000362555" description="ATP synthase subunit a, chloroplastic">
    <location>
        <begin position="1"/>
        <end position="247"/>
    </location>
</feature>
<feature type="transmembrane region" description="Helical" evidence="1">
    <location>
        <begin position="38"/>
        <end position="58"/>
    </location>
</feature>
<feature type="transmembrane region" description="Helical" evidence="1">
    <location>
        <begin position="95"/>
        <end position="115"/>
    </location>
</feature>
<feature type="transmembrane region" description="Helical" evidence="1">
    <location>
        <begin position="134"/>
        <end position="154"/>
    </location>
</feature>
<feature type="transmembrane region" description="Helical" evidence="1">
    <location>
        <begin position="199"/>
        <end position="219"/>
    </location>
</feature>
<feature type="transmembrane region" description="Helical" evidence="1">
    <location>
        <begin position="220"/>
        <end position="240"/>
    </location>
</feature>
<name>ATPI_EUCGG</name>
<reference key="1">
    <citation type="journal article" date="2005" name="DNA Res.">
        <title>Complete nucleotide sequence of the chloroplast genome from the Tasmanian blue gum, Eucalyptus globulus (Myrtaceae).</title>
        <authorList>
            <person name="Steane D.A."/>
        </authorList>
    </citation>
    <scope>NUCLEOTIDE SEQUENCE [LARGE SCALE GENOMIC DNA]</scope>
</reference>
<evidence type="ECO:0000255" key="1">
    <source>
        <dbReference type="HAMAP-Rule" id="MF_01393"/>
    </source>
</evidence>
<comment type="function">
    <text evidence="1">Key component of the proton channel; it plays a direct role in the translocation of protons across the membrane.</text>
</comment>
<comment type="subunit">
    <text evidence="1">F-type ATPases have 2 components, CF(1) - the catalytic core - and CF(0) - the membrane proton channel. CF(1) has five subunits: alpha(3), beta(3), gamma(1), delta(1), epsilon(1). CF(0) has four main subunits: a, b, b' and c.</text>
</comment>
<comment type="subcellular location">
    <subcellularLocation>
        <location evidence="1">Plastid</location>
        <location evidence="1">Chloroplast thylakoid membrane</location>
        <topology evidence="1">Multi-pass membrane protein</topology>
    </subcellularLocation>
</comment>
<comment type="similarity">
    <text evidence="1">Belongs to the ATPase A chain family.</text>
</comment>
<gene>
    <name evidence="1" type="primary">atpI</name>
</gene>
<proteinExistence type="inferred from homology"/>
<protein>
    <recommendedName>
        <fullName evidence="1">ATP synthase subunit a, chloroplastic</fullName>
    </recommendedName>
    <alternativeName>
        <fullName evidence="1">ATP synthase F0 sector subunit a</fullName>
    </alternativeName>
    <alternativeName>
        <fullName evidence="1">F-ATPase subunit IV</fullName>
    </alternativeName>
</protein>
<dbReference type="EMBL" id="AY780259">
    <property type="protein sequence ID" value="AAX21017.1"/>
    <property type="molecule type" value="Genomic_DNA"/>
</dbReference>
<dbReference type="RefSeq" id="YP_636287.1">
    <property type="nucleotide sequence ID" value="NC_008115.1"/>
</dbReference>
<dbReference type="SMR" id="Q49L10"/>
<dbReference type="GeneID" id="4108480"/>
<dbReference type="GO" id="GO:0009535">
    <property type="term" value="C:chloroplast thylakoid membrane"/>
    <property type="evidence" value="ECO:0007669"/>
    <property type="project" value="UniProtKB-SubCell"/>
</dbReference>
<dbReference type="GO" id="GO:0005886">
    <property type="term" value="C:plasma membrane"/>
    <property type="evidence" value="ECO:0007669"/>
    <property type="project" value="UniProtKB-UniRule"/>
</dbReference>
<dbReference type="GO" id="GO:0045259">
    <property type="term" value="C:proton-transporting ATP synthase complex"/>
    <property type="evidence" value="ECO:0007669"/>
    <property type="project" value="UniProtKB-KW"/>
</dbReference>
<dbReference type="GO" id="GO:0046933">
    <property type="term" value="F:proton-transporting ATP synthase activity, rotational mechanism"/>
    <property type="evidence" value="ECO:0007669"/>
    <property type="project" value="UniProtKB-UniRule"/>
</dbReference>
<dbReference type="CDD" id="cd00310">
    <property type="entry name" value="ATP-synt_Fo_a_6"/>
    <property type="match status" value="1"/>
</dbReference>
<dbReference type="FunFam" id="1.20.120.220:FF:000001">
    <property type="entry name" value="ATP synthase subunit a, chloroplastic"/>
    <property type="match status" value="1"/>
</dbReference>
<dbReference type="Gene3D" id="1.20.120.220">
    <property type="entry name" value="ATP synthase, F0 complex, subunit A"/>
    <property type="match status" value="1"/>
</dbReference>
<dbReference type="HAMAP" id="MF_01393">
    <property type="entry name" value="ATP_synth_a_bact"/>
    <property type="match status" value="1"/>
</dbReference>
<dbReference type="InterPro" id="IPR045082">
    <property type="entry name" value="ATP_syn_F0_a_bact/chloroplast"/>
</dbReference>
<dbReference type="InterPro" id="IPR000568">
    <property type="entry name" value="ATP_synth_F0_asu"/>
</dbReference>
<dbReference type="InterPro" id="IPR023011">
    <property type="entry name" value="ATP_synth_F0_asu_AS"/>
</dbReference>
<dbReference type="InterPro" id="IPR035908">
    <property type="entry name" value="F0_ATP_A_sf"/>
</dbReference>
<dbReference type="NCBIfam" id="TIGR01131">
    <property type="entry name" value="ATP_synt_6_or_A"/>
    <property type="match status" value="1"/>
</dbReference>
<dbReference type="PANTHER" id="PTHR42823">
    <property type="entry name" value="ATP SYNTHASE SUBUNIT A, CHLOROPLASTIC"/>
    <property type="match status" value="1"/>
</dbReference>
<dbReference type="PANTHER" id="PTHR42823:SF3">
    <property type="entry name" value="ATP SYNTHASE SUBUNIT A, CHLOROPLASTIC"/>
    <property type="match status" value="1"/>
</dbReference>
<dbReference type="Pfam" id="PF00119">
    <property type="entry name" value="ATP-synt_A"/>
    <property type="match status" value="1"/>
</dbReference>
<dbReference type="PRINTS" id="PR00123">
    <property type="entry name" value="ATPASEA"/>
</dbReference>
<dbReference type="SUPFAM" id="SSF81336">
    <property type="entry name" value="F1F0 ATP synthase subunit A"/>
    <property type="match status" value="1"/>
</dbReference>
<dbReference type="PROSITE" id="PS00449">
    <property type="entry name" value="ATPASE_A"/>
    <property type="match status" value="1"/>
</dbReference>
<keyword id="KW-0066">ATP synthesis</keyword>
<keyword id="KW-0138">CF(0)</keyword>
<keyword id="KW-0150">Chloroplast</keyword>
<keyword id="KW-0375">Hydrogen ion transport</keyword>
<keyword id="KW-0406">Ion transport</keyword>
<keyword id="KW-0472">Membrane</keyword>
<keyword id="KW-0934">Plastid</keyword>
<keyword id="KW-0793">Thylakoid</keyword>
<keyword id="KW-0812">Transmembrane</keyword>
<keyword id="KW-1133">Transmembrane helix</keyword>
<keyword id="KW-0813">Transport</keyword>
<organism>
    <name type="scientific">Eucalyptus globulus subsp. globulus</name>
    <name type="common">Tasmanian blue gum</name>
    <dbReference type="NCBI Taxonomy" id="71271"/>
    <lineage>
        <taxon>Eukaryota</taxon>
        <taxon>Viridiplantae</taxon>
        <taxon>Streptophyta</taxon>
        <taxon>Embryophyta</taxon>
        <taxon>Tracheophyta</taxon>
        <taxon>Spermatophyta</taxon>
        <taxon>Magnoliopsida</taxon>
        <taxon>eudicotyledons</taxon>
        <taxon>Gunneridae</taxon>
        <taxon>Pentapetalae</taxon>
        <taxon>rosids</taxon>
        <taxon>malvids</taxon>
        <taxon>Myrtales</taxon>
        <taxon>Myrtaceae</taxon>
        <taxon>Myrtoideae</taxon>
        <taxon>Eucalypteae</taxon>
        <taxon>Eucalyptus</taxon>
    </lineage>
</organism>
<sequence>MNVLSCSTNTLKGLYDISGVEVGQHFYWQIGGFQVHGQVLITSWVVIAILLGSASIAVRNPQTIPNDSQNFFEYVLEFIRDVSKTQIGEEYGPWVPFIGTMFLFIFVSNWSGALLPWKIIELPHGELAAPTNDINTTVALALLTSVAYFYAGLTKKGLSYFSKYIQPTPILLPINILEDFTKPLSLSFRLFGNILADELVVVVLVSLVPLVVPIPVMFLGLFTSGIQALIFATLAAAYIGESMEGHH</sequence>
<accession>Q49L10</accession>